<sequence length="221" mass="23044">MVRIASGEMKERLAVYFIMGSQNSERPAADVLKEALDGGVTLFQFREKGPGALKGADKEALARQLQRLCRAYGVPFIVNDDVELALAIDADGVHVGQDDEDARRVREKIGDKILGVSAHNVEEAMAAVEAGADYLGVGPIYPTSSKEDAKEAQGPDVLRRLREAGITIPIVAIGGITAANAKTVVEAGADGVSVISAIASAPSPKAAAAALAEAVRAARTR</sequence>
<dbReference type="EC" id="2.5.1.3" evidence="1"/>
<dbReference type="EMBL" id="BA000043">
    <property type="protein sequence ID" value="BAD75796.1"/>
    <property type="molecule type" value="Genomic_DNA"/>
</dbReference>
<dbReference type="RefSeq" id="WP_011231007.1">
    <property type="nucleotide sequence ID" value="NC_006510.1"/>
</dbReference>
<dbReference type="SMR" id="Q5KZU0"/>
<dbReference type="STRING" id="235909.GK1511"/>
<dbReference type="GeneID" id="32063422"/>
<dbReference type="KEGG" id="gka:GK1511"/>
<dbReference type="eggNOG" id="COG0352">
    <property type="taxonomic scope" value="Bacteria"/>
</dbReference>
<dbReference type="HOGENOM" id="CLU_018272_3_2_9"/>
<dbReference type="UniPathway" id="UPA00060">
    <property type="reaction ID" value="UER00141"/>
</dbReference>
<dbReference type="Proteomes" id="UP000001172">
    <property type="component" value="Chromosome"/>
</dbReference>
<dbReference type="GO" id="GO:0005737">
    <property type="term" value="C:cytoplasm"/>
    <property type="evidence" value="ECO:0007669"/>
    <property type="project" value="TreeGrafter"/>
</dbReference>
<dbReference type="GO" id="GO:0000287">
    <property type="term" value="F:magnesium ion binding"/>
    <property type="evidence" value="ECO:0007669"/>
    <property type="project" value="UniProtKB-UniRule"/>
</dbReference>
<dbReference type="GO" id="GO:0004789">
    <property type="term" value="F:thiamine-phosphate diphosphorylase activity"/>
    <property type="evidence" value="ECO:0007669"/>
    <property type="project" value="UniProtKB-UniRule"/>
</dbReference>
<dbReference type="GO" id="GO:0009228">
    <property type="term" value="P:thiamine biosynthetic process"/>
    <property type="evidence" value="ECO:0007669"/>
    <property type="project" value="UniProtKB-KW"/>
</dbReference>
<dbReference type="GO" id="GO:0009229">
    <property type="term" value="P:thiamine diphosphate biosynthetic process"/>
    <property type="evidence" value="ECO:0007669"/>
    <property type="project" value="UniProtKB-UniRule"/>
</dbReference>
<dbReference type="CDD" id="cd00564">
    <property type="entry name" value="TMP_TenI"/>
    <property type="match status" value="1"/>
</dbReference>
<dbReference type="FunFam" id="3.20.20.70:FF:000096">
    <property type="entry name" value="Thiamine-phosphate synthase"/>
    <property type="match status" value="1"/>
</dbReference>
<dbReference type="Gene3D" id="3.20.20.70">
    <property type="entry name" value="Aldolase class I"/>
    <property type="match status" value="1"/>
</dbReference>
<dbReference type="HAMAP" id="MF_00097">
    <property type="entry name" value="TMP_synthase"/>
    <property type="match status" value="1"/>
</dbReference>
<dbReference type="InterPro" id="IPR013785">
    <property type="entry name" value="Aldolase_TIM"/>
</dbReference>
<dbReference type="InterPro" id="IPR036206">
    <property type="entry name" value="ThiamineP_synth_sf"/>
</dbReference>
<dbReference type="InterPro" id="IPR022998">
    <property type="entry name" value="ThiamineP_synth_TenI"/>
</dbReference>
<dbReference type="InterPro" id="IPR034291">
    <property type="entry name" value="TMP_synthase"/>
</dbReference>
<dbReference type="NCBIfam" id="TIGR00693">
    <property type="entry name" value="thiE"/>
    <property type="match status" value="1"/>
</dbReference>
<dbReference type="PANTHER" id="PTHR20857">
    <property type="entry name" value="THIAMINE-PHOSPHATE PYROPHOSPHORYLASE"/>
    <property type="match status" value="1"/>
</dbReference>
<dbReference type="PANTHER" id="PTHR20857:SF15">
    <property type="entry name" value="THIAMINE-PHOSPHATE SYNTHASE"/>
    <property type="match status" value="1"/>
</dbReference>
<dbReference type="Pfam" id="PF02581">
    <property type="entry name" value="TMP-TENI"/>
    <property type="match status" value="1"/>
</dbReference>
<dbReference type="SUPFAM" id="SSF51391">
    <property type="entry name" value="Thiamin phosphate synthase"/>
    <property type="match status" value="1"/>
</dbReference>
<evidence type="ECO:0000255" key="1">
    <source>
        <dbReference type="HAMAP-Rule" id="MF_00097"/>
    </source>
</evidence>
<name>THIE_GEOKA</name>
<reference key="1">
    <citation type="journal article" date="2004" name="Nucleic Acids Res.">
        <title>Thermoadaptation trait revealed by the genome sequence of thermophilic Geobacillus kaustophilus.</title>
        <authorList>
            <person name="Takami H."/>
            <person name="Takaki Y."/>
            <person name="Chee G.-J."/>
            <person name="Nishi S."/>
            <person name="Shimamura S."/>
            <person name="Suzuki H."/>
            <person name="Matsui S."/>
            <person name="Uchiyama I."/>
        </authorList>
    </citation>
    <scope>NUCLEOTIDE SEQUENCE [LARGE SCALE GENOMIC DNA]</scope>
    <source>
        <strain>HTA426</strain>
    </source>
</reference>
<proteinExistence type="inferred from homology"/>
<organism>
    <name type="scientific">Geobacillus kaustophilus (strain HTA426)</name>
    <dbReference type="NCBI Taxonomy" id="235909"/>
    <lineage>
        <taxon>Bacteria</taxon>
        <taxon>Bacillati</taxon>
        <taxon>Bacillota</taxon>
        <taxon>Bacilli</taxon>
        <taxon>Bacillales</taxon>
        <taxon>Anoxybacillaceae</taxon>
        <taxon>Geobacillus</taxon>
        <taxon>Geobacillus thermoleovorans group</taxon>
    </lineage>
</organism>
<comment type="function">
    <text evidence="1">Condenses 4-methyl-5-(beta-hydroxyethyl)thiazole monophosphate (THZ-P) and 2-methyl-4-amino-5-hydroxymethyl pyrimidine pyrophosphate (HMP-PP) to form thiamine monophosphate (TMP).</text>
</comment>
<comment type="catalytic activity">
    <reaction evidence="1">
        <text>2-[(2R,5Z)-2-carboxy-4-methylthiazol-5(2H)-ylidene]ethyl phosphate + 4-amino-2-methyl-5-(diphosphooxymethyl)pyrimidine + 2 H(+) = thiamine phosphate + CO2 + diphosphate</text>
        <dbReference type="Rhea" id="RHEA:47844"/>
        <dbReference type="ChEBI" id="CHEBI:15378"/>
        <dbReference type="ChEBI" id="CHEBI:16526"/>
        <dbReference type="ChEBI" id="CHEBI:33019"/>
        <dbReference type="ChEBI" id="CHEBI:37575"/>
        <dbReference type="ChEBI" id="CHEBI:57841"/>
        <dbReference type="ChEBI" id="CHEBI:62899"/>
        <dbReference type="EC" id="2.5.1.3"/>
    </reaction>
</comment>
<comment type="catalytic activity">
    <reaction evidence="1">
        <text>2-(2-carboxy-4-methylthiazol-5-yl)ethyl phosphate + 4-amino-2-methyl-5-(diphosphooxymethyl)pyrimidine + 2 H(+) = thiamine phosphate + CO2 + diphosphate</text>
        <dbReference type="Rhea" id="RHEA:47848"/>
        <dbReference type="ChEBI" id="CHEBI:15378"/>
        <dbReference type="ChEBI" id="CHEBI:16526"/>
        <dbReference type="ChEBI" id="CHEBI:33019"/>
        <dbReference type="ChEBI" id="CHEBI:37575"/>
        <dbReference type="ChEBI" id="CHEBI:57841"/>
        <dbReference type="ChEBI" id="CHEBI:62890"/>
        <dbReference type="EC" id="2.5.1.3"/>
    </reaction>
</comment>
<comment type="catalytic activity">
    <reaction evidence="1">
        <text>4-methyl-5-(2-phosphooxyethyl)-thiazole + 4-amino-2-methyl-5-(diphosphooxymethyl)pyrimidine + H(+) = thiamine phosphate + diphosphate</text>
        <dbReference type="Rhea" id="RHEA:22328"/>
        <dbReference type="ChEBI" id="CHEBI:15378"/>
        <dbReference type="ChEBI" id="CHEBI:33019"/>
        <dbReference type="ChEBI" id="CHEBI:37575"/>
        <dbReference type="ChEBI" id="CHEBI:57841"/>
        <dbReference type="ChEBI" id="CHEBI:58296"/>
        <dbReference type="EC" id="2.5.1.3"/>
    </reaction>
</comment>
<comment type="cofactor">
    <cofactor evidence="1">
        <name>Mg(2+)</name>
        <dbReference type="ChEBI" id="CHEBI:18420"/>
    </cofactor>
    <text evidence="1">Binds 1 Mg(2+) ion per subunit.</text>
</comment>
<comment type="pathway">
    <text evidence="1">Cofactor biosynthesis; thiamine diphosphate biosynthesis; thiamine phosphate from 4-amino-2-methyl-5-diphosphomethylpyrimidine and 4-methyl-5-(2-phosphoethyl)-thiazole: step 1/1.</text>
</comment>
<comment type="similarity">
    <text evidence="1">Belongs to the thiamine-phosphate synthase family.</text>
</comment>
<gene>
    <name evidence="1" type="primary">thiE</name>
    <name type="ordered locus">GK1511</name>
</gene>
<accession>Q5KZU0</accession>
<protein>
    <recommendedName>
        <fullName evidence="1">Thiamine-phosphate synthase</fullName>
        <shortName evidence="1">TP synthase</shortName>
        <shortName evidence="1">TPS</shortName>
        <ecNumber evidence="1">2.5.1.3</ecNumber>
    </recommendedName>
    <alternativeName>
        <fullName evidence="1">Thiamine-phosphate pyrophosphorylase</fullName>
        <shortName evidence="1">TMP pyrophosphorylase</shortName>
        <shortName evidence="1">TMP-PPase</shortName>
    </alternativeName>
</protein>
<feature type="chain" id="PRO_1000008138" description="Thiamine-phosphate synthase">
    <location>
        <begin position="1"/>
        <end position="221"/>
    </location>
</feature>
<feature type="binding site" evidence="1">
    <location>
        <begin position="44"/>
        <end position="48"/>
    </location>
    <ligand>
        <name>4-amino-2-methyl-5-(diphosphooxymethyl)pyrimidine</name>
        <dbReference type="ChEBI" id="CHEBI:57841"/>
    </ligand>
</feature>
<feature type="binding site" evidence="1">
    <location>
        <position position="79"/>
    </location>
    <ligand>
        <name>4-amino-2-methyl-5-(diphosphooxymethyl)pyrimidine</name>
        <dbReference type="ChEBI" id="CHEBI:57841"/>
    </ligand>
</feature>
<feature type="binding site" evidence="1">
    <location>
        <position position="80"/>
    </location>
    <ligand>
        <name>Mg(2+)</name>
        <dbReference type="ChEBI" id="CHEBI:18420"/>
    </ligand>
</feature>
<feature type="binding site" evidence="1">
    <location>
        <position position="99"/>
    </location>
    <ligand>
        <name>Mg(2+)</name>
        <dbReference type="ChEBI" id="CHEBI:18420"/>
    </ligand>
</feature>
<feature type="binding site" evidence="1">
    <location>
        <position position="117"/>
    </location>
    <ligand>
        <name>4-amino-2-methyl-5-(diphosphooxymethyl)pyrimidine</name>
        <dbReference type="ChEBI" id="CHEBI:57841"/>
    </ligand>
</feature>
<feature type="binding site" evidence="1">
    <location>
        <begin position="143"/>
        <end position="145"/>
    </location>
    <ligand>
        <name>2-[(2R,5Z)-2-carboxy-4-methylthiazol-5(2H)-ylidene]ethyl phosphate</name>
        <dbReference type="ChEBI" id="CHEBI:62899"/>
    </ligand>
</feature>
<feature type="binding site" evidence="1">
    <location>
        <position position="146"/>
    </location>
    <ligand>
        <name>4-amino-2-methyl-5-(diphosphooxymethyl)pyrimidine</name>
        <dbReference type="ChEBI" id="CHEBI:57841"/>
    </ligand>
</feature>
<feature type="binding site" evidence="1">
    <location>
        <position position="175"/>
    </location>
    <ligand>
        <name>2-[(2R,5Z)-2-carboxy-4-methylthiazol-5(2H)-ylidene]ethyl phosphate</name>
        <dbReference type="ChEBI" id="CHEBI:62899"/>
    </ligand>
</feature>
<feature type="binding site" evidence="1">
    <location>
        <begin position="195"/>
        <end position="196"/>
    </location>
    <ligand>
        <name>2-[(2R,5Z)-2-carboxy-4-methylthiazol-5(2H)-ylidene]ethyl phosphate</name>
        <dbReference type="ChEBI" id="CHEBI:62899"/>
    </ligand>
</feature>
<keyword id="KW-0460">Magnesium</keyword>
<keyword id="KW-0479">Metal-binding</keyword>
<keyword id="KW-1185">Reference proteome</keyword>
<keyword id="KW-0784">Thiamine biosynthesis</keyword>
<keyword id="KW-0808">Transferase</keyword>